<reference key="1">
    <citation type="journal article" date="2008" name="PLoS Genet.">
        <title>The genome of Borrelia recurrentis, the agent of deadly louse-borne relapsing fever, is a degraded subset of tick-borne Borrelia duttonii.</title>
        <authorList>
            <person name="Lescot M."/>
            <person name="Audic S."/>
            <person name="Robert C."/>
            <person name="Nguyen T.T."/>
            <person name="Blanc G."/>
            <person name="Cutler S.J."/>
            <person name="Wincker P."/>
            <person name="Couloux A."/>
            <person name="Claverie J.-M."/>
            <person name="Raoult D."/>
            <person name="Drancourt M."/>
        </authorList>
    </citation>
    <scope>NUCLEOTIDE SEQUENCE [LARGE SCALE GENOMIC DNA]</scope>
    <source>
        <strain>Ly</strain>
    </source>
</reference>
<accession>B5RMZ9</accession>
<sequence>MRKILKLKIGREDLILETGLLAKQANGAVLATYGGSTVLATVCCSDSIRENLDFVPLSVEYNEKYYAAGKIPGGFIKREGKPKDKEVLVSRLIDRPMRPLFDKRFGREIQVVPTTLSTDQMNPPDIVGMNAAFTAVFLSDIPFNGPIAAVRIAYLNDEFIVNPSFDEIQDSVLDIVVAGSLDGITMVEGGANEVSEEILLDAIDKAYAYIKQICDLQKEFIYLIGEREKLPLAYEEKVFEFKDDLRSLIYSELKDACFVRGKLNRDKAIKLVKQKAYEHFSSLEQINDENEILFYKACDDFEQEIVRKSILEDNLRTDGRTPTQIRDIIAEVDLLKRTHGSALFTRGETQALAVTTLGTSIDEQVMDDIDGDKRLNFMLHYNFPPFSVGETGRLMTGRREIGHGHLAQRSLEAMLPKKDDFPYTIRVVSEVLESNGSSSMATVCSGSMSLMAAGVPVKEQVAGIAMGLISNDDKYVILSDILGEEDHLGDMDFKVAGTKNGITGFQMDIKISNVTKQLMRDALEQARIGRMHILSIMDSVISSSRGDISVNAPKIVQLQIDIDKISLVIGSTGKTVKAITDEFEVRVQIEQDGRITLFGTDNLKMQKAKAKIESIVREPKVGEIYDGIVKKINSFGAFIELTPTKEGFLSNRSRSRDDRYGSDIRHSRYSNRNSRYGRDNRSSFSMRFPRLEEGQIVKVRISDIDKFGKIELELARD</sequence>
<protein>
    <recommendedName>
        <fullName evidence="1">Polyribonucleotide nucleotidyltransferase</fullName>
        <ecNumber evidence="1">2.7.7.8</ecNumber>
    </recommendedName>
    <alternativeName>
        <fullName evidence="1">Polynucleotide phosphorylase</fullName>
        <shortName evidence="1">PNPase</shortName>
    </alternativeName>
</protein>
<proteinExistence type="inferred from homology"/>
<name>PNP_BORDL</name>
<keyword id="KW-0963">Cytoplasm</keyword>
<keyword id="KW-0460">Magnesium</keyword>
<keyword id="KW-0479">Metal-binding</keyword>
<keyword id="KW-0548">Nucleotidyltransferase</keyword>
<keyword id="KW-0694">RNA-binding</keyword>
<keyword id="KW-0808">Transferase</keyword>
<gene>
    <name evidence="1" type="primary">pnp</name>
    <name type="ordered locus">BDU_813</name>
</gene>
<evidence type="ECO:0000255" key="1">
    <source>
        <dbReference type="HAMAP-Rule" id="MF_01595"/>
    </source>
</evidence>
<evidence type="ECO:0000256" key="2">
    <source>
        <dbReference type="SAM" id="MobiDB-lite"/>
    </source>
</evidence>
<organism>
    <name type="scientific">Borrelia duttonii (strain Ly)</name>
    <dbReference type="NCBI Taxonomy" id="412419"/>
    <lineage>
        <taxon>Bacteria</taxon>
        <taxon>Pseudomonadati</taxon>
        <taxon>Spirochaetota</taxon>
        <taxon>Spirochaetia</taxon>
        <taxon>Spirochaetales</taxon>
        <taxon>Borreliaceae</taxon>
        <taxon>Borrelia</taxon>
    </lineage>
</organism>
<comment type="function">
    <text evidence="1">Involved in mRNA degradation. Catalyzes the phosphorolysis of single-stranded polyribonucleotides processively in the 3'- to 5'-direction.</text>
</comment>
<comment type="catalytic activity">
    <reaction evidence="1">
        <text>RNA(n+1) + phosphate = RNA(n) + a ribonucleoside 5'-diphosphate</text>
        <dbReference type="Rhea" id="RHEA:22096"/>
        <dbReference type="Rhea" id="RHEA-COMP:14527"/>
        <dbReference type="Rhea" id="RHEA-COMP:17342"/>
        <dbReference type="ChEBI" id="CHEBI:43474"/>
        <dbReference type="ChEBI" id="CHEBI:57930"/>
        <dbReference type="ChEBI" id="CHEBI:140395"/>
        <dbReference type="EC" id="2.7.7.8"/>
    </reaction>
</comment>
<comment type="cofactor">
    <cofactor evidence="1">
        <name>Mg(2+)</name>
        <dbReference type="ChEBI" id="CHEBI:18420"/>
    </cofactor>
</comment>
<comment type="subcellular location">
    <subcellularLocation>
        <location evidence="1">Cytoplasm</location>
    </subcellularLocation>
</comment>
<comment type="similarity">
    <text evidence="1">Belongs to the polyribonucleotide nucleotidyltransferase family.</text>
</comment>
<feature type="chain" id="PRO_1000147890" description="Polyribonucleotide nucleotidyltransferase">
    <location>
        <begin position="1"/>
        <end position="717"/>
    </location>
</feature>
<feature type="domain" description="KH" evidence="1">
    <location>
        <begin position="553"/>
        <end position="612"/>
    </location>
</feature>
<feature type="domain" description="S1 motif" evidence="1">
    <location>
        <begin position="622"/>
        <end position="715"/>
    </location>
</feature>
<feature type="region of interest" description="Disordered" evidence="2">
    <location>
        <begin position="650"/>
        <end position="681"/>
    </location>
</feature>
<feature type="compositionally biased region" description="Basic and acidic residues" evidence="2">
    <location>
        <begin position="654"/>
        <end position="666"/>
    </location>
</feature>
<feature type="binding site" evidence="1">
    <location>
        <position position="486"/>
    </location>
    <ligand>
        <name>Mg(2+)</name>
        <dbReference type="ChEBI" id="CHEBI:18420"/>
    </ligand>
</feature>
<feature type="binding site" evidence="1">
    <location>
        <position position="492"/>
    </location>
    <ligand>
        <name>Mg(2+)</name>
        <dbReference type="ChEBI" id="CHEBI:18420"/>
    </ligand>
</feature>
<dbReference type="EC" id="2.7.7.8" evidence="1"/>
<dbReference type="EMBL" id="CP000976">
    <property type="protein sequence ID" value="ACH93735.1"/>
    <property type="molecule type" value="Genomic_DNA"/>
</dbReference>
<dbReference type="RefSeq" id="WP_012538544.1">
    <property type="nucleotide sequence ID" value="NC_011229.1"/>
</dbReference>
<dbReference type="SMR" id="B5RMZ9"/>
<dbReference type="STRING" id="412419.BDU_813"/>
<dbReference type="KEGG" id="bdu:BDU_813"/>
<dbReference type="eggNOG" id="COG1185">
    <property type="taxonomic scope" value="Bacteria"/>
</dbReference>
<dbReference type="HOGENOM" id="CLU_004217_2_2_12"/>
<dbReference type="OrthoDB" id="9804305at2"/>
<dbReference type="Proteomes" id="UP000000611">
    <property type="component" value="Chromosome"/>
</dbReference>
<dbReference type="GO" id="GO:0005829">
    <property type="term" value="C:cytosol"/>
    <property type="evidence" value="ECO:0007669"/>
    <property type="project" value="TreeGrafter"/>
</dbReference>
<dbReference type="GO" id="GO:0000175">
    <property type="term" value="F:3'-5'-RNA exonuclease activity"/>
    <property type="evidence" value="ECO:0007669"/>
    <property type="project" value="TreeGrafter"/>
</dbReference>
<dbReference type="GO" id="GO:0000287">
    <property type="term" value="F:magnesium ion binding"/>
    <property type="evidence" value="ECO:0007669"/>
    <property type="project" value="UniProtKB-UniRule"/>
</dbReference>
<dbReference type="GO" id="GO:0004654">
    <property type="term" value="F:polyribonucleotide nucleotidyltransferase activity"/>
    <property type="evidence" value="ECO:0007669"/>
    <property type="project" value="UniProtKB-UniRule"/>
</dbReference>
<dbReference type="GO" id="GO:0003723">
    <property type="term" value="F:RNA binding"/>
    <property type="evidence" value="ECO:0007669"/>
    <property type="project" value="UniProtKB-UniRule"/>
</dbReference>
<dbReference type="GO" id="GO:0006402">
    <property type="term" value="P:mRNA catabolic process"/>
    <property type="evidence" value="ECO:0007669"/>
    <property type="project" value="UniProtKB-UniRule"/>
</dbReference>
<dbReference type="GO" id="GO:0006396">
    <property type="term" value="P:RNA processing"/>
    <property type="evidence" value="ECO:0007669"/>
    <property type="project" value="InterPro"/>
</dbReference>
<dbReference type="CDD" id="cd02393">
    <property type="entry name" value="KH-I_PNPase"/>
    <property type="match status" value="1"/>
</dbReference>
<dbReference type="CDD" id="cd11363">
    <property type="entry name" value="RNase_PH_PNPase_1"/>
    <property type="match status" value="1"/>
</dbReference>
<dbReference type="CDD" id="cd11364">
    <property type="entry name" value="RNase_PH_PNPase_2"/>
    <property type="match status" value="1"/>
</dbReference>
<dbReference type="FunFam" id="3.30.1370.10:FF:000001">
    <property type="entry name" value="Polyribonucleotide nucleotidyltransferase"/>
    <property type="match status" value="1"/>
</dbReference>
<dbReference type="FunFam" id="3.30.230.70:FF:000001">
    <property type="entry name" value="Polyribonucleotide nucleotidyltransferase"/>
    <property type="match status" value="1"/>
</dbReference>
<dbReference type="FunFam" id="3.30.230.70:FF:000002">
    <property type="entry name" value="Polyribonucleotide nucleotidyltransferase"/>
    <property type="match status" value="1"/>
</dbReference>
<dbReference type="Gene3D" id="3.30.230.70">
    <property type="entry name" value="GHMP Kinase, N-terminal domain"/>
    <property type="match status" value="2"/>
</dbReference>
<dbReference type="Gene3D" id="3.30.1370.10">
    <property type="entry name" value="K Homology domain, type 1"/>
    <property type="match status" value="1"/>
</dbReference>
<dbReference type="Gene3D" id="2.40.50.140">
    <property type="entry name" value="Nucleic acid-binding proteins"/>
    <property type="match status" value="1"/>
</dbReference>
<dbReference type="HAMAP" id="MF_01595">
    <property type="entry name" value="PNPase"/>
    <property type="match status" value="1"/>
</dbReference>
<dbReference type="InterPro" id="IPR001247">
    <property type="entry name" value="ExoRNase_PH_dom1"/>
</dbReference>
<dbReference type="InterPro" id="IPR015847">
    <property type="entry name" value="ExoRNase_PH_dom2"/>
</dbReference>
<dbReference type="InterPro" id="IPR036345">
    <property type="entry name" value="ExoRNase_PH_dom2_sf"/>
</dbReference>
<dbReference type="InterPro" id="IPR004087">
    <property type="entry name" value="KH_dom"/>
</dbReference>
<dbReference type="InterPro" id="IPR004088">
    <property type="entry name" value="KH_dom_type_1"/>
</dbReference>
<dbReference type="InterPro" id="IPR036612">
    <property type="entry name" value="KH_dom_type_1_sf"/>
</dbReference>
<dbReference type="InterPro" id="IPR012340">
    <property type="entry name" value="NA-bd_OB-fold"/>
</dbReference>
<dbReference type="InterPro" id="IPR012162">
    <property type="entry name" value="PNPase"/>
</dbReference>
<dbReference type="InterPro" id="IPR027408">
    <property type="entry name" value="PNPase/RNase_PH_dom_sf"/>
</dbReference>
<dbReference type="InterPro" id="IPR015848">
    <property type="entry name" value="PNPase_PH_RNA-bd_bac/org-type"/>
</dbReference>
<dbReference type="InterPro" id="IPR036456">
    <property type="entry name" value="PNPase_PH_RNA-bd_sf"/>
</dbReference>
<dbReference type="InterPro" id="IPR020568">
    <property type="entry name" value="Ribosomal_Su5_D2-typ_SF"/>
</dbReference>
<dbReference type="InterPro" id="IPR003029">
    <property type="entry name" value="S1_domain"/>
</dbReference>
<dbReference type="NCBIfam" id="TIGR03591">
    <property type="entry name" value="polynuc_phos"/>
    <property type="match status" value="1"/>
</dbReference>
<dbReference type="NCBIfam" id="NF008805">
    <property type="entry name" value="PRK11824.1"/>
    <property type="match status" value="1"/>
</dbReference>
<dbReference type="PANTHER" id="PTHR11252">
    <property type="entry name" value="POLYRIBONUCLEOTIDE NUCLEOTIDYLTRANSFERASE"/>
    <property type="match status" value="1"/>
</dbReference>
<dbReference type="PANTHER" id="PTHR11252:SF0">
    <property type="entry name" value="POLYRIBONUCLEOTIDE NUCLEOTIDYLTRANSFERASE 1, MITOCHONDRIAL"/>
    <property type="match status" value="1"/>
</dbReference>
<dbReference type="Pfam" id="PF00013">
    <property type="entry name" value="KH_1"/>
    <property type="match status" value="1"/>
</dbReference>
<dbReference type="Pfam" id="PF03726">
    <property type="entry name" value="PNPase"/>
    <property type="match status" value="1"/>
</dbReference>
<dbReference type="Pfam" id="PF01138">
    <property type="entry name" value="RNase_PH"/>
    <property type="match status" value="2"/>
</dbReference>
<dbReference type="Pfam" id="PF03725">
    <property type="entry name" value="RNase_PH_C"/>
    <property type="match status" value="2"/>
</dbReference>
<dbReference type="Pfam" id="PF00575">
    <property type="entry name" value="S1"/>
    <property type="match status" value="1"/>
</dbReference>
<dbReference type="PIRSF" id="PIRSF005499">
    <property type="entry name" value="PNPase"/>
    <property type="match status" value="1"/>
</dbReference>
<dbReference type="SMART" id="SM00322">
    <property type="entry name" value="KH"/>
    <property type="match status" value="1"/>
</dbReference>
<dbReference type="SMART" id="SM00316">
    <property type="entry name" value="S1"/>
    <property type="match status" value="1"/>
</dbReference>
<dbReference type="SUPFAM" id="SSF54791">
    <property type="entry name" value="Eukaryotic type KH-domain (KH-domain type I)"/>
    <property type="match status" value="1"/>
</dbReference>
<dbReference type="SUPFAM" id="SSF50249">
    <property type="entry name" value="Nucleic acid-binding proteins"/>
    <property type="match status" value="1"/>
</dbReference>
<dbReference type="SUPFAM" id="SSF46915">
    <property type="entry name" value="Polynucleotide phosphorylase/guanosine pentaphosphate synthase (PNPase/GPSI), domain 3"/>
    <property type="match status" value="1"/>
</dbReference>
<dbReference type="SUPFAM" id="SSF55666">
    <property type="entry name" value="Ribonuclease PH domain 2-like"/>
    <property type="match status" value="2"/>
</dbReference>
<dbReference type="SUPFAM" id="SSF54211">
    <property type="entry name" value="Ribosomal protein S5 domain 2-like"/>
    <property type="match status" value="2"/>
</dbReference>
<dbReference type="PROSITE" id="PS50084">
    <property type="entry name" value="KH_TYPE_1"/>
    <property type="match status" value="1"/>
</dbReference>
<dbReference type="PROSITE" id="PS50126">
    <property type="entry name" value="S1"/>
    <property type="match status" value="1"/>
</dbReference>